<dbReference type="EC" id="5.3.4.1" evidence="1"/>
<dbReference type="EMBL" id="M86870">
    <property type="protein sequence ID" value="AAA19217.1"/>
    <property type="molecule type" value="mRNA"/>
</dbReference>
<dbReference type="EMBL" id="BC061535">
    <property type="protein sequence ID" value="AAH61535.1"/>
    <property type="molecule type" value="mRNA"/>
</dbReference>
<dbReference type="PIR" id="S32476">
    <property type="entry name" value="S32476"/>
</dbReference>
<dbReference type="RefSeq" id="NP_446301.1">
    <property type="nucleotide sequence ID" value="NM_053849.1"/>
</dbReference>
<dbReference type="PDB" id="3EC3">
    <property type="method" value="X-ray"/>
    <property type="resolution" value="1.92 A"/>
    <property type="chains" value="A/B=283-523"/>
</dbReference>
<dbReference type="PDBsum" id="3EC3"/>
<dbReference type="SMR" id="P38659"/>
<dbReference type="BioGRID" id="250512">
    <property type="interactions" value="5"/>
</dbReference>
<dbReference type="FunCoup" id="P38659">
    <property type="interactions" value="1003"/>
</dbReference>
<dbReference type="IntAct" id="P38659">
    <property type="interactions" value="11"/>
</dbReference>
<dbReference type="STRING" id="10116.ENSRNOP00000008728"/>
<dbReference type="GlyGen" id="P38659">
    <property type="glycosylation" value="1 site, 1 O-linked glycan (1 site)"/>
</dbReference>
<dbReference type="iPTMnet" id="P38659"/>
<dbReference type="PhosphoSitePlus" id="P38659"/>
<dbReference type="jPOST" id="P38659"/>
<dbReference type="PaxDb" id="10116-ENSRNOP00000008728"/>
<dbReference type="GeneID" id="116598"/>
<dbReference type="KEGG" id="rno:116598"/>
<dbReference type="UCSC" id="RGD:619835">
    <property type="organism name" value="rat"/>
</dbReference>
<dbReference type="AGR" id="RGD:619835"/>
<dbReference type="CTD" id="9601"/>
<dbReference type="RGD" id="619835">
    <property type="gene designation" value="Pdia4"/>
</dbReference>
<dbReference type="eggNOG" id="KOG0190">
    <property type="taxonomic scope" value="Eukaryota"/>
</dbReference>
<dbReference type="InParanoid" id="P38659"/>
<dbReference type="PhylomeDB" id="P38659"/>
<dbReference type="BRENDA" id="5.3.4.1">
    <property type="organism ID" value="5301"/>
</dbReference>
<dbReference type="EvolutionaryTrace" id="P38659"/>
<dbReference type="PRO" id="PR:P38659"/>
<dbReference type="Proteomes" id="UP000002494">
    <property type="component" value="Unplaced"/>
</dbReference>
<dbReference type="GO" id="GO:0009986">
    <property type="term" value="C:cell surface"/>
    <property type="evidence" value="ECO:0000266"/>
    <property type="project" value="RGD"/>
</dbReference>
<dbReference type="GO" id="GO:0005783">
    <property type="term" value="C:endoplasmic reticulum"/>
    <property type="evidence" value="ECO:0000266"/>
    <property type="project" value="RGD"/>
</dbReference>
<dbReference type="GO" id="GO:0034663">
    <property type="term" value="C:endoplasmic reticulum chaperone complex"/>
    <property type="evidence" value="ECO:0000266"/>
    <property type="project" value="RGD"/>
</dbReference>
<dbReference type="GO" id="GO:0005788">
    <property type="term" value="C:endoplasmic reticulum lumen"/>
    <property type="evidence" value="ECO:0007669"/>
    <property type="project" value="UniProtKB-SubCell"/>
</dbReference>
<dbReference type="GO" id="GO:0005615">
    <property type="term" value="C:extracellular space"/>
    <property type="evidence" value="ECO:0000266"/>
    <property type="project" value="RGD"/>
</dbReference>
<dbReference type="GO" id="GO:0042470">
    <property type="term" value="C:melanosome"/>
    <property type="evidence" value="ECO:0007669"/>
    <property type="project" value="UniProtKB-SubCell"/>
</dbReference>
<dbReference type="GO" id="GO:0005790">
    <property type="term" value="C:smooth endoplasmic reticulum"/>
    <property type="evidence" value="ECO:0000314"/>
    <property type="project" value="UniProtKB"/>
</dbReference>
<dbReference type="GO" id="GO:0005178">
    <property type="term" value="F:integrin binding"/>
    <property type="evidence" value="ECO:0000266"/>
    <property type="project" value="RGD"/>
</dbReference>
<dbReference type="GO" id="GO:0003756">
    <property type="term" value="F:protein disulfide isomerase activity"/>
    <property type="evidence" value="ECO:0000314"/>
    <property type="project" value="UniProtKB"/>
</dbReference>
<dbReference type="GO" id="GO:0015035">
    <property type="term" value="F:protein-disulfide reductase activity"/>
    <property type="evidence" value="ECO:0000266"/>
    <property type="project" value="RGD"/>
</dbReference>
<dbReference type="GO" id="GO:0072378">
    <property type="term" value="P:blood coagulation, fibrin clot formation"/>
    <property type="evidence" value="ECO:0000266"/>
    <property type="project" value="RGD"/>
</dbReference>
<dbReference type="GO" id="GO:0061077">
    <property type="term" value="P:chaperone-mediated protein folding"/>
    <property type="evidence" value="ECO:0000314"/>
    <property type="project" value="UniProtKB"/>
</dbReference>
<dbReference type="GO" id="GO:0070527">
    <property type="term" value="P:platelet aggregation"/>
    <property type="evidence" value="ECO:0000266"/>
    <property type="project" value="RGD"/>
</dbReference>
<dbReference type="GO" id="GO:1903334">
    <property type="term" value="P:positive regulation of protein folding"/>
    <property type="evidence" value="ECO:0000314"/>
    <property type="project" value="RGD"/>
</dbReference>
<dbReference type="GO" id="GO:0006457">
    <property type="term" value="P:protein folding"/>
    <property type="evidence" value="ECO:0000318"/>
    <property type="project" value="GO_Central"/>
</dbReference>
<dbReference type="GO" id="GO:0034976">
    <property type="term" value="P:response to endoplasmic reticulum stress"/>
    <property type="evidence" value="ECO:0000318"/>
    <property type="project" value="GO_Central"/>
</dbReference>
<dbReference type="CDD" id="cd02961">
    <property type="entry name" value="PDI_a_family"/>
    <property type="match status" value="2"/>
</dbReference>
<dbReference type="CDD" id="cd02995">
    <property type="entry name" value="PDI_a_PDI_a'_C"/>
    <property type="match status" value="1"/>
</dbReference>
<dbReference type="CDD" id="cd03073">
    <property type="entry name" value="PDI_b'_ERp72_ERp57"/>
    <property type="match status" value="1"/>
</dbReference>
<dbReference type="CDD" id="cd03068">
    <property type="entry name" value="PDI_b_ERp72"/>
    <property type="match status" value="1"/>
</dbReference>
<dbReference type="FunFam" id="3.40.30.10:FF:000017">
    <property type="entry name" value="Protein disulfide-isomerase A4"/>
    <property type="match status" value="1"/>
</dbReference>
<dbReference type="FunFam" id="3.40.30.10:FF:000067">
    <property type="entry name" value="Protein disulfide-isomerase A4"/>
    <property type="match status" value="1"/>
</dbReference>
<dbReference type="FunFam" id="3.40.30.10:FF:000076">
    <property type="entry name" value="Protein disulfide-isomerase A4"/>
    <property type="match status" value="1"/>
</dbReference>
<dbReference type="FunFam" id="3.40.30.10:FF:000084">
    <property type="entry name" value="Protein disulfide-isomerase A4"/>
    <property type="match status" value="1"/>
</dbReference>
<dbReference type="FunFam" id="3.40.30.10:FF:000126">
    <property type="entry name" value="Protein disulfide-isomerase A4"/>
    <property type="match status" value="1"/>
</dbReference>
<dbReference type="Gene3D" id="3.40.30.10">
    <property type="entry name" value="Glutaredoxin"/>
    <property type="match status" value="5"/>
</dbReference>
<dbReference type="InterPro" id="IPR005788">
    <property type="entry name" value="PDI_thioredoxin-like_dom"/>
</dbReference>
<dbReference type="InterPro" id="IPR041866">
    <property type="entry name" value="PDIA4_PDI_b"/>
</dbReference>
<dbReference type="InterPro" id="IPR005792">
    <property type="entry name" value="Prot_disulphide_isomerase"/>
</dbReference>
<dbReference type="InterPro" id="IPR017068">
    <property type="entry name" value="Protein_diS-isomerase_A4"/>
</dbReference>
<dbReference type="InterPro" id="IPR036249">
    <property type="entry name" value="Thioredoxin-like_sf"/>
</dbReference>
<dbReference type="InterPro" id="IPR017937">
    <property type="entry name" value="Thioredoxin_CS"/>
</dbReference>
<dbReference type="InterPro" id="IPR013766">
    <property type="entry name" value="Thioredoxin_domain"/>
</dbReference>
<dbReference type="NCBIfam" id="TIGR01130">
    <property type="entry name" value="ER_PDI_fam"/>
    <property type="match status" value="1"/>
</dbReference>
<dbReference type="NCBIfam" id="TIGR01126">
    <property type="entry name" value="pdi_dom"/>
    <property type="match status" value="3"/>
</dbReference>
<dbReference type="PANTHER" id="PTHR18929">
    <property type="entry name" value="PROTEIN DISULFIDE ISOMERASE"/>
    <property type="match status" value="1"/>
</dbReference>
<dbReference type="PANTHER" id="PTHR18929:SF210">
    <property type="entry name" value="PROTEIN DISULFIDE-ISOMERASE A4"/>
    <property type="match status" value="1"/>
</dbReference>
<dbReference type="Pfam" id="PF00085">
    <property type="entry name" value="Thioredoxin"/>
    <property type="match status" value="3"/>
</dbReference>
<dbReference type="Pfam" id="PF13848">
    <property type="entry name" value="Thioredoxin_6"/>
    <property type="match status" value="1"/>
</dbReference>
<dbReference type="PIRSF" id="PIRSF036862">
    <property type="entry name" value="Disulphide_isom_A4"/>
    <property type="match status" value="1"/>
</dbReference>
<dbReference type="PRINTS" id="PR00421">
    <property type="entry name" value="THIOREDOXIN"/>
</dbReference>
<dbReference type="SUPFAM" id="SSF52833">
    <property type="entry name" value="Thioredoxin-like"/>
    <property type="match status" value="5"/>
</dbReference>
<dbReference type="PROSITE" id="PS00014">
    <property type="entry name" value="ER_TARGET"/>
    <property type="match status" value="1"/>
</dbReference>
<dbReference type="PROSITE" id="PS00194">
    <property type="entry name" value="THIOREDOXIN_1"/>
    <property type="match status" value="3"/>
</dbReference>
<dbReference type="PROSITE" id="PS51352">
    <property type="entry name" value="THIOREDOXIN_2"/>
    <property type="match status" value="3"/>
</dbReference>
<protein>
    <recommendedName>
        <fullName>Protein disulfide-isomerase A4</fullName>
        <ecNumber evidence="1">5.3.4.1</ecNumber>
    </recommendedName>
    <alternativeName>
        <fullName>Calcium-binding protein 2</fullName>
        <shortName>CaBP2</shortName>
    </alternativeName>
    <alternativeName>
        <fullName>Endoplasmic reticulum resident protein 70</fullName>
        <shortName>ER protein 70</shortName>
        <shortName>ERp70</shortName>
    </alternativeName>
    <alternativeName>
        <fullName>Endoplasmic reticulum resident protein 72</fullName>
        <shortName>ER protein 72</shortName>
        <shortName>ERp-72</shortName>
        <shortName>ERp72</shortName>
    </alternativeName>
</protein>
<evidence type="ECO:0000250" key="1">
    <source>
        <dbReference type="UniProtKB" id="P08003"/>
    </source>
</evidence>
<evidence type="ECO:0000250" key="2">
    <source>
        <dbReference type="UniProtKB" id="P13667"/>
    </source>
</evidence>
<evidence type="ECO:0000255" key="3"/>
<evidence type="ECO:0000255" key="4">
    <source>
        <dbReference type="PROSITE-ProRule" id="PRU00691"/>
    </source>
</evidence>
<evidence type="ECO:0000256" key="5">
    <source>
        <dbReference type="SAM" id="MobiDB-lite"/>
    </source>
</evidence>
<evidence type="ECO:0000305" key="6"/>
<evidence type="ECO:0007829" key="7">
    <source>
        <dbReference type="PDB" id="3EC3"/>
    </source>
</evidence>
<gene>
    <name type="primary">Pdia4</name>
    <name type="synonym">Cabp2</name>
    <name type="synonym">Erp70</name>
</gene>
<organism>
    <name type="scientific">Rattus norvegicus</name>
    <name type="common">Rat</name>
    <dbReference type="NCBI Taxonomy" id="10116"/>
    <lineage>
        <taxon>Eukaryota</taxon>
        <taxon>Metazoa</taxon>
        <taxon>Chordata</taxon>
        <taxon>Craniata</taxon>
        <taxon>Vertebrata</taxon>
        <taxon>Euteleostomi</taxon>
        <taxon>Mammalia</taxon>
        <taxon>Eutheria</taxon>
        <taxon>Euarchontoglires</taxon>
        <taxon>Glires</taxon>
        <taxon>Rodentia</taxon>
        <taxon>Myomorpha</taxon>
        <taxon>Muroidea</taxon>
        <taxon>Muridae</taxon>
        <taxon>Murinae</taxon>
        <taxon>Rattus</taxon>
    </lineage>
</organism>
<feature type="signal peptide" evidence="3">
    <location>
        <begin position="1"/>
        <end position="20"/>
    </location>
</feature>
<feature type="chain" id="PRO_0000034231" description="Protein disulfide-isomerase A4">
    <location>
        <begin position="21"/>
        <end position="643"/>
    </location>
</feature>
<feature type="domain" description="Thioredoxin 1" evidence="4">
    <location>
        <begin position="21"/>
        <end position="167"/>
    </location>
</feature>
<feature type="domain" description="Thioredoxin 2" evidence="4">
    <location>
        <begin position="167"/>
        <end position="299"/>
    </location>
</feature>
<feature type="domain" description="Thioredoxin 3" evidence="4">
    <location>
        <begin position="503"/>
        <end position="634"/>
    </location>
</feature>
<feature type="region of interest" description="Disordered" evidence="5">
    <location>
        <begin position="24"/>
        <end position="58"/>
    </location>
</feature>
<feature type="short sequence motif" description="CXXC" evidence="1">
    <location>
        <begin position="89"/>
        <end position="92"/>
    </location>
</feature>
<feature type="short sequence motif" description="CXXC" evidence="1">
    <location>
        <begin position="553"/>
        <end position="556"/>
    </location>
</feature>
<feature type="short sequence motif" description="Prevents secretion from ER">
    <location>
        <begin position="640"/>
        <end position="643"/>
    </location>
</feature>
<feature type="compositionally biased region" description="Acidic residues" evidence="5">
    <location>
        <begin position="32"/>
        <end position="56"/>
    </location>
</feature>
<feature type="modified residue" description="N6-acetyllysine" evidence="2">
    <location>
        <position position="364"/>
    </location>
</feature>
<feature type="disulfide bond" description="Redox-active" evidence="1 4">
    <location>
        <begin position="89"/>
        <end position="92"/>
    </location>
</feature>
<feature type="disulfide bond" description="Redox-active" evidence="4">
    <location>
        <begin position="204"/>
        <end position="207"/>
    </location>
</feature>
<feature type="disulfide bond" description="Redox-active" evidence="1 4">
    <location>
        <begin position="553"/>
        <end position="556"/>
    </location>
</feature>
<feature type="sequence conflict" description="In Ref. 1; AAA19217." evidence="6" ref="1">
    <original>D</original>
    <variation>E</variation>
    <location>
        <position position="43"/>
    </location>
</feature>
<feature type="sequence conflict" description="In Ref. 1; AAA19217." evidence="6" ref="1">
    <original>A</original>
    <variation>D</variation>
    <location>
        <position position="391"/>
    </location>
</feature>
<feature type="sequence conflict" description="In Ref. 1; AAA19217." evidence="6" ref="1">
    <original>Q</original>
    <variation>R</variation>
    <location>
        <position position="497"/>
    </location>
</feature>
<feature type="strand" evidence="7">
    <location>
        <begin position="284"/>
        <end position="287"/>
    </location>
</feature>
<feature type="helix" evidence="7">
    <location>
        <begin position="291"/>
        <end position="300"/>
    </location>
</feature>
<feature type="strand" evidence="7">
    <location>
        <begin position="305"/>
        <end position="309"/>
    </location>
</feature>
<feature type="helix" evidence="7">
    <location>
        <begin position="316"/>
        <end position="328"/>
    </location>
</feature>
<feature type="turn" evidence="7">
    <location>
        <begin position="329"/>
        <end position="331"/>
    </location>
</feature>
<feature type="strand" evidence="7">
    <location>
        <begin position="334"/>
        <end position="337"/>
    </location>
</feature>
<feature type="helix" evidence="7">
    <location>
        <begin position="340"/>
        <end position="346"/>
    </location>
</feature>
<feature type="strand" evidence="7">
    <location>
        <begin position="350"/>
        <end position="356"/>
    </location>
</feature>
<feature type="helix" evidence="7">
    <location>
        <begin position="359"/>
        <end position="361"/>
    </location>
</feature>
<feature type="strand" evidence="7">
    <location>
        <begin position="370"/>
        <end position="373"/>
    </location>
</feature>
<feature type="helix" evidence="7">
    <location>
        <begin position="380"/>
        <end position="390"/>
    </location>
</feature>
<feature type="strand" evidence="7">
    <location>
        <begin position="395"/>
        <end position="398"/>
    </location>
</feature>
<feature type="turn" evidence="7">
    <location>
        <begin position="400"/>
        <end position="402"/>
    </location>
</feature>
<feature type="helix" evidence="7">
    <location>
        <begin position="403"/>
        <end position="406"/>
    </location>
</feature>
<feature type="strand" evidence="7">
    <location>
        <begin position="409"/>
        <end position="417"/>
    </location>
</feature>
<feature type="turn" evidence="7">
    <location>
        <begin position="423"/>
        <end position="425"/>
    </location>
</feature>
<feature type="helix" evidence="7">
    <location>
        <begin position="426"/>
        <end position="440"/>
    </location>
</feature>
<feature type="strand" evidence="7">
    <location>
        <begin position="446"/>
        <end position="452"/>
    </location>
</feature>
<feature type="turn" evidence="7">
    <location>
        <begin position="453"/>
        <end position="456"/>
    </location>
</feature>
<feature type="helix" evidence="7">
    <location>
        <begin position="457"/>
        <end position="462"/>
    </location>
</feature>
<feature type="strand" evidence="7">
    <location>
        <begin position="473"/>
        <end position="477"/>
    </location>
</feature>
<feature type="strand" evidence="7">
    <location>
        <begin position="483"/>
        <end position="485"/>
    </location>
</feature>
<feature type="helix" evidence="7">
    <location>
        <begin position="493"/>
        <end position="504"/>
    </location>
</feature>
<name>PDIA4_RAT</name>
<comment type="catalytic activity">
    <reaction evidence="1">
        <text>Catalyzes the rearrangement of -S-S- bonds in proteins.</text>
        <dbReference type="EC" id="5.3.4.1"/>
    </reaction>
</comment>
<comment type="subunit">
    <text evidence="1">Part of a large chaperone multiprotein complex comprising DNAJB11, HSP90B1, HSPA5, HYOU, PDIA2, PDIA4, PDIA6, PPIB, SDF2L1, UGGT1 and very small amounts of ERP29, but not, or at very low levels, CALR nor CANX. Component of a complex containing at least CRELD2, MANF, MATN3 and PDIA4 (By similarity).</text>
</comment>
<comment type="interaction">
    <interactant intactId="EBI-917435">
        <id>P38659</id>
    </interactant>
    <interactant intactId="EBI-916926">
        <id>P24368</id>
        <label>Ppib</label>
    </interactant>
    <organismsDiffer>false</organismsDiffer>
    <experiments>2</experiments>
</comment>
<comment type="interaction">
    <interactant intactId="EBI-917435">
        <id>P38659</id>
    </interactant>
    <interactant intactId="EBI-1549657">
        <id>P06882</id>
        <label>Tg</label>
    </interactant>
    <organismsDiffer>false</organismsDiffer>
    <experiments>3</experiments>
</comment>
<comment type="interaction">
    <interactant intactId="EBI-917435">
        <id>P38659</id>
    </interactant>
    <interactant intactId="EBI-128899">
        <id>Q9VVJ7</id>
        <label>Sep15</label>
    </interactant>
    <organismsDiffer>true</organismsDiffer>
    <experiments>2</experiments>
</comment>
<comment type="subcellular location">
    <subcellularLocation>
        <location evidence="2">Endoplasmic reticulum lumen</location>
    </subcellularLocation>
    <subcellularLocation>
        <location evidence="2">Melanosome</location>
    </subcellularLocation>
</comment>
<comment type="induction">
    <text>Upon glucose starvation, as well as treatment with tunicamycin.</text>
</comment>
<comment type="PTM">
    <text>O-glycosylated.</text>
</comment>
<comment type="similarity">
    <text evidence="6">Belongs to the protein disulfide isomerase family.</text>
</comment>
<proteinExistence type="evidence at protein level"/>
<accession>P38659</accession>
<accession>Q6P7S5</accession>
<sequence length="643" mass="72720">MKLRKAWLLVLLLALTQLLAAASAEDAHEDASDSENPIEDDDDEEEDEEDEDDLEVKEENGVWVLNDENFDNFVADKDTVLLEFYAPWCGHCKQFAPEYEKIASTLKDNDPPIAVAKIDATSASMLASKFDVSGYPTIKILKKGQAVDYDGSRTQEEIVAKVREVSQPDWTPPPEVTLTLTKENFDDVVNNADIILVEFYAPWCGHCKKLAPEYEKAAKELSKRSPPIPLAKVDATEQTDLAKRFDVSGYPTLKIFRKGRPFDYNGPREKYGIVDYMVEQSGPPSKEILTLKQVQEFLKDGDDVVILGVFQGVGDPGYLQYQDAANTLREDYKFHHTFSTEIAKFLKVSLGKLVLMQPEKFQSKYEPRMHVMDVQGSTEASAIKDYVVKHALPLVGHRKTSNDAKRYSKRPLVVVYYSVDFSFDYRTATQFWRNKVLEVAKDFPEYTFAIADEEDYATEVKDLGLSESGEDVNAAILDESGKKFAMEPEEFDSDALQEFVMAFKKGKLKPVIKSQPVPKNNKGPVRVVVGKTFDAIVMDPKKDVLIEFYAPWCGHCKQLEPVYTSLGKKYKGQKDLVIAKMDATANDITNDRYKVEGFPTIYFAPSGDKKNPIKFEGGNRDLEHLSKFIDEHATKRSRTKEEL</sequence>
<reference key="1">
    <citation type="journal article" date="1993" name="Eur. J. Biochem.">
        <title>CaBP2 is a rat homolog of ERp72 with proteindisulfide isomerase activity.</title>
        <authorList>
            <person name="Van P.N."/>
            <person name="Rupp K."/>
            <person name="Lampen A."/>
            <person name="Soeling H.-D."/>
        </authorList>
    </citation>
    <scope>NUCLEOTIDE SEQUENCE [MRNA]</scope>
    <source>
        <strain>Wistar</strain>
        <tissue>Liver</tissue>
    </source>
</reference>
<reference key="2">
    <citation type="journal article" date="2004" name="Genome Res.">
        <title>The status, quality, and expansion of the NIH full-length cDNA project: the Mammalian Gene Collection (MGC).</title>
        <authorList>
            <consortium name="The MGC Project Team"/>
        </authorList>
    </citation>
    <scope>NUCLEOTIDE SEQUENCE [LARGE SCALE MRNA]</scope>
    <source>
        <tissue>Pituitary</tissue>
    </source>
</reference>
<reference key="3">
    <citation type="journal article" date="2002" name="Mol. Biol. Cell">
        <title>A subset of chaperones and folding enzymes form multiprotein complexes in endoplasmic reticulum to bind nascent proteins.</title>
        <authorList>
            <person name="Meunier L."/>
            <person name="Usherwood Y.-K."/>
            <person name="Chung K.T."/>
            <person name="Hendershot L.M."/>
        </authorList>
    </citation>
    <scope>COMPONENT OF A CHAPERONE COMPLEX</scope>
</reference>
<reference key="4">
    <citation type="journal article" date="2009" name="Structure">
        <title>Structure of the noncatalytic domains and global fold of the protein disulfide isomerase ERp72.</title>
        <authorList>
            <person name="Kozlov G."/>
            <person name="Maattanen P."/>
            <person name="Schrag J.D."/>
            <person name="Hura G.L."/>
            <person name="Gabrielli L."/>
            <person name="Cygler M."/>
            <person name="Thomas D.Y."/>
            <person name="Gehring K."/>
        </authorList>
    </citation>
    <scope>X-RAY CRYSTALLOGRAPHY (1.92 ANGSTROMS) OF 283-523</scope>
</reference>
<keyword id="KW-0002">3D-structure</keyword>
<keyword id="KW-0007">Acetylation</keyword>
<keyword id="KW-0106">Calcium</keyword>
<keyword id="KW-1015">Disulfide bond</keyword>
<keyword id="KW-0256">Endoplasmic reticulum</keyword>
<keyword id="KW-0325">Glycoprotein</keyword>
<keyword id="KW-0413">Isomerase</keyword>
<keyword id="KW-0676">Redox-active center</keyword>
<keyword id="KW-1185">Reference proteome</keyword>
<keyword id="KW-0677">Repeat</keyword>
<keyword id="KW-0732">Signal</keyword>